<protein>
    <recommendedName>
        <fullName evidence="1">Orotate phosphoribosyltransferase</fullName>
        <shortName evidence="1">OPRT</shortName>
        <shortName evidence="1">OPRTase</shortName>
        <ecNumber evidence="1">2.4.2.10</ecNumber>
    </recommendedName>
</protein>
<dbReference type="EC" id="2.4.2.10" evidence="1"/>
<dbReference type="EMBL" id="AL591688">
    <property type="protein sequence ID" value="CAC41918.1"/>
    <property type="molecule type" value="Genomic_DNA"/>
</dbReference>
<dbReference type="RefSeq" id="NP_384587.1">
    <property type="nucleotide sequence ID" value="NC_003047.1"/>
</dbReference>
<dbReference type="RefSeq" id="WP_010968605.1">
    <property type="nucleotide sequence ID" value="NC_003047.1"/>
</dbReference>
<dbReference type="SMR" id="Q92SC6"/>
<dbReference type="EnsemblBacteria" id="CAC41918">
    <property type="protein sequence ID" value="CAC41918"/>
    <property type="gene ID" value="SMc02165"/>
</dbReference>
<dbReference type="KEGG" id="sme:SMc02165"/>
<dbReference type="PATRIC" id="fig|266834.11.peg.1858"/>
<dbReference type="eggNOG" id="COG0461">
    <property type="taxonomic scope" value="Bacteria"/>
</dbReference>
<dbReference type="HOGENOM" id="CLU_074878_1_0_5"/>
<dbReference type="OrthoDB" id="9802134at2"/>
<dbReference type="UniPathway" id="UPA00070">
    <property type="reaction ID" value="UER00119"/>
</dbReference>
<dbReference type="Proteomes" id="UP000001976">
    <property type="component" value="Chromosome"/>
</dbReference>
<dbReference type="GO" id="GO:0000287">
    <property type="term" value="F:magnesium ion binding"/>
    <property type="evidence" value="ECO:0007669"/>
    <property type="project" value="UniProtKB-UniRule"/>
</dbReference>
<dbReference type="GO" id="GO:0004588">
    <property type="term" value="F:orotate phosphoribosyltransferase activity"/>
    <property type="evidence" value="ECO:0007669"/>
    <property type="project" value="UniProtKB-UniRule"/>
</dbReference>
<dbReference type="GO" id="GO:0044205">
    <property type="term" value="P:'de novo' UMP biosynthetic process"/>
    <property type="evidence" value="ECO:0007669"/>
    <property type="project" value="UniProtKB-UniRule"/>
</dbReference>
<dbReference type="GO" id="GO:0019856">
    <property type="term" value="P:pyrimidine nucleobase biosynthetic process"/>
    <property type="evidence" value="ECO:0007669"/>
    <property type="project" value="TreeGrafter"/>
</dbReference>
<dbReference type="CDD" id="cd06223">
    <property type="entry name" value="PRTases_typeI"/>
    <property type="match status" value="1"/>
</dbReference>
<dbReference type="Gene3D" id="3.40.50.2020">
    <property type="match status" value="1"/>
</dbReference>
<dbReference type="HAMAP" id="MF_01208">
    <property type="entry name" value="PyrE"/>
    <property type="match status" value="1"/>
</dbReference>
<dbReference type="InterPro" id="IPR023031">
    <property type="entry name" value="OPRT"/>
</dbReference>
<dbReference type="InterPro" id="IPR004467">
    <property type="entry name" value="Or_phspho_trans_dom"/>
</dbReference>
<dbReference type="InterPro" id="IPR000836">
    <property type="entry name" value="PRibTrfase_dom"/>
</dbReference>
<dbReference type="InterPro" id="IPR029057">
    <property type="entry name" value="PRTase-like"/>
</dbReference>
<dbReference type="NCBIfam" id="NF001729">
    <property type="entry name" value="PRK00455.1-3"/>
    <property type="match status" value="1"/>
</dbReference>
<dbReference type="NCBIfam" id="TIGR00336">
    <property type="entry name" value="pyrE"/>
    <property type="match status" value="1"/>
</dbReference>
<dbReference type="PANTHER" id="PTHR19278">
    <property type="entry name" value="OROTATE PHOSPHORIBOSYLTRANSFERASE"/>
    <property type="match status" value="1"/>
</dbReference>
<dbReference type="PANTHER" id="PTHR19278:SF9">
    <property type="entry name" value="URIDINE 5'-MONOPHOSPHATE SYNTHASE"/>
    <property type="match status" value="1"/>
</dbReference>
<dbReference type="Pfam" id="PF00156">
    <property type="entry name" value="Pribosyltran"/>
    <property type="match status" value="1"/>
</dbReference>
<dbReference type="SUPFAM" id="SSF53271">
    <property type="entry name" value="PRTase-like"/>
    <property type="match status" value="1"/>
</dbReference>
<sequence length="232" mass="25466">MFSNAFTDKAVMAELVAKMLWEIKAVHFRADEPYRLASGMASPVYIDCRKLVSYPRIRSAVMDFAAATILREAGFEQFDVVAGGETAGIPFAAMLAERLGLPMIYVRKAPKGHGRNAQIEGYMPEGARVLVIEDLTTAGGSMFKFIDAIRAAGGVVEHGIALFYYDIFPEARGNMKSKGVDLHYIATWRNVLAVARELALFDEKTLNEVEAFLNAPLDWSGRNGGVRALAVQ</sequence>
<comment type="function">
    <text evidence="1">Catalyzes the transfer of a ribosyl phosphate group from 5-phosphoribose 1-diphosphate to orotate, leading to the formation of orotidine monophosphate (OMP).</text>
</comment>
<comment type="catalytic activity">
    <reaction evidence="1">
        <text>orotidine 5'-phosphate + diphosphate = orotate + 5-phospho-alpha-D-ribose 1-diphosphate</text>
        <dbReference type="Rhea" id="RHEA:10380"/>
        <dbReference type="ChEBI" id="CHEBI:30839"/>
        <dbReference type="ChEBI" id="CHEBI:33019"/>
        <dbReference type="ChEBI" id="CHEBI:57538"/>
        <dbReference type="ChEBI" id="CHEBI:58017"/>
        <dbReference type="EC" id="2.4.2.10"/>
    </reaction>
</comment>
<comment type="cofactor">
    <cofactor evidence="1">
        <name>Mg(2+)</name>
        <dbReference type="ChEBI" id="CHEBI:18420"/>
    </cofactor>
</comment>
<comment type="pathway">
    <text evidence="1">Pyrimidine metabolism; UMP biosynthesis via de novo pathway; UMP from orotate: step 1/2.</text>
</comment>
<comment type="subunit">
    <text evidence="1">Homodimer.</text>
</comment>
<comment type="similarity">
    <text evidence="1">Belongs to the purine/pyrimidine phosphoribosyltransferase family. PyrE subfamily.</text>
</comment>
<name>PYRE_RHIME</name>
<evidence type="ECO:0000255" key="1">
    <source>
        <dbReference type="HAMAP-Rule" id="MF_01208"/>
    </source>
</evidence>
<feature type="chain" id="PRO_0000110731" description="Orotate phosphoribosyltransferase">
    <location>
        <begin position="1"/>
        <end position="232"/>
    </location>
</feature>
<feature type="binding site" evidence="1">
    <location>
        <position position="107"/>
    </location>
    <ligand>
        <name>5-phospho-alpha-D-ribose 1-diphosphate</name>
        <dbReference type="ChEBI" id="CHEBI:58017"/>
        <note>ligand shared between dimeric partners</note>
    </ligand>
</feature>
<feature type="binding site" description="in other chain" evidence="1">
    <location>
        <position position="108"/>
    </location>
    <ligand>
        <name>5-phospho-alpha-D-ribose 1-diphosphate</name>
        <dbReference type="ChEBI" id="CHEBI:58017"/>
        <note>ligand shared between dimeric partners</note>
    </ligand>
</feature>
<feature type="binding site" evidence="1">
    <location>
        <position position="111"/>
    </location>
    <ligand>
        <name>5-phospho-alpha-D-ribose 1-diphosphate</name>
        <dbReference type="ChEBI" id="CHEBI:58017"/>
        <note>ligand shared between dimeric partners</note>
    </ligand>
</feature>
<feature type="binding site" evidence="1">
    <location>
        <position position="113"/>
    </location>
    <ligand>
        <name>5-phospho-alpha-D-ribose 1-diphosphate</name>
        <dbReference type="ChEBI" id="CHEBI:58017"/>
        <note>ligand shared between dimeric partners</note>
    </ligand>
</feature>
<feature type="binding site" description="in other chain" evidence="1">
    <location>
        <begin position="133"/>
        <end position="141"/>
    </location>
    <ligand>
        <name>5-phospho-alpha-D-ribose 1-diphosphate</name>
        <dbReference type="ChEBI" id="CHEBI:58017"/>
        <note>ligand shared between dimeric partners</note>
    </ligand>
</feature>
<feature type="binding site" evidence="1">
    <location>
        <position position="137"/>
    </location>
    <ligand>
        <name>orotate</name>
        <dbReference type="ChEBI" id="CHEBI:30839"/>
    </ligand>
</feature>
<accession>Q92SC6</accession>
<keyword id="KW-0328">Glycosyltransferase</keyword>
<keyword id="KW-0460">Magnesium</keyword>
<keyword id="KW-0665">Pyrimidine biosynthesis</keyword>
<keyword id="KW-1185">Reference proteome</keyword>
<keyword id="KW-0808">Transferase</keyword>
<proteinExistence type="inferred from homology"/>
<gene>
    <name evidence="1" type="primary">pyrE</name>
    <name type="ordered locus">R00481</name>
    <name type="ORF">SMc02165</name>
</gene>
<reference key="1">
    <citation type="journal article" date="2001" name="Proc. Natl. Acad. Sci. U.S.A.">
        <title>Analysis of the chromosome sequence of the legume symbiont Sinorhizobium meliloti strain 1021.</title>
        <authorList>
            <person name="Capela D."/>
            <person name="Barloy-Hubler F."/>
            <person name="Gouzy J."/>
            <person name="Bothe G."/>
            <person name="Ampe F."/>
            <person name="Batut J."/>
            <person name="Boistard P."/>
            <person name="Becker A."/>
            <person name="Boutry M."/>
            <person name="Cadieu E."/>
            <person name="Dreano S."/>
            <person name="Gloux S."/>
            <person name="Godrie T."/>
            <person name="Goffeau A."/>
            <person name="Kahn D."/>
            <person name="Kiss E."/>
            <person name="Lelaure V."/>
            <person name="Masuy D."/>
            <person name="Pohl T."/>
            <person name="Portetelle D."/>
            <person name="Puehler A."/>
            <person name="Purnelle B."/>
            <person name="Ramsperger U."/>
            <person name="Renard C."/>
            <person name="Thebault P."/>
            <person name="Vandenbol M."/>
            <person name="Weidner S."/>
            <person name="Galibert F."/>
        </authorList>
    </citation>
    <scope>NUCLEOTIDE SEQUENCE [LARGE SCALE GENOMIC DNA]</scope>
    <source>
        <strain>1021</strain>
    </source>
</reference>
<reference key="2">
    <citation type="journal article" date="2001" name="Science">
        <title>The composite genome of the legume symbiont Sinorhizobium meliloti.</title>
        <authorList>
            <person name="Galibert F."/>
            <person name="Finan T.M."/>
            <person name="Long S.R."/>
            <person name="Puehler A."/>
            <person name="Abola P."/>
            <person name="Ampe F."/>
            <person name="Barloy-Hubler F."/>
            <person name="Barnett M.J."/>
            <person name="Becker A."/>
            <person name="Boistard P."/>
            <person name="Bothe G."/>
            <person name="Boutry M."/>
            <person name="Bowser L."/>
            <person name="Buhrmester J."/>
            <person name="Cadieu E."/>
            <person name="Capela D."/>
            <person name="Chain P."/>
            <person name="Cowie A."/>
            <person name="Davis R.W."/>
            <person name="Dreano S."/>
            <person name="Federspiel N.A."/>
            <person name="Fisher R.F."/>
            <person name="Gloux S."/>
            <person name="Godrie T."/>
            <person name="Goffeau A."/>
            <person name="Golding B."/>
            <person name="Gouzy J."/>
            <person name="Gurjal M."/>
            <person name="Hernandez-Lucas I."/>
            <person name="Hong A."/>
            <person name="Huizar L."/>
            <person name="Hyman R.W."/>
            <person name="Jones T."/>
            <person name="Kahn D."/>
            <person name="Kahn M.L."/>
            <person name="Kalman S."/>
            <person name="Keating D.H."/>
            <person name="Kiss E."/>
            <person name="Komp C."/>
            <person name="Lelaure V."/>
            <person name="Masuy D."/>
            <person name="Palm C."/>
            <person name="Peck M.C."/>
            <person name="Pohl T.M."/>
            <person name="Portetelle D."/>
            <person name="Purnelle B."/>
            <person name="Ramsperger U."/>
            <person name="Surzycki R."/>
            <person name="Thebault P."/>
            <person name="Vandenbol M."/>
            <person name="Vorhoelter F.J."/>
            <person name="Weidner S."/>
            <person name="Wells D.H."/>
            <person name="Wong K."/>
            <person name="Yeh K.-C."/>
            <person name="Batut J."/>
        </authorList>
    </citation>
    <scope>NUCLEOTIDE SEQUENCE [LARGE SCALE GENOMIC DNA]</scope>
    <source>
        <strain>1021</strain>
    </source>
</reference>
<organism>
    <name type="scientific">Rhizobium meliloti (strain 1021)</name>
    <name type="common">Ensifer meliloti</name>
    <name type="synonym">Sinorhizobium meliloti</name>
    <dbReference type="NCBI Taxonomy" id="266834"/>
    <lineage>
        <taxon>Bacteria</taxon>
        <taxon>Pseudomonadati</taxon>
        <taxon>Pseudomonadota</taxon>
        <taxon>Alphaproteobacteria</taxon>
        <taxon>Hyphomicrobiales</taxon>
        <taxon>Rhizobiaceae</taxon>
        <taxon>Sinorhizobium/Ensifer group</taxon>
        <taxon>Sinorhizobium</taxon>
    </lineage>
</organism>